<reference key="1">
    <citation type="submission" date="1997-11" db="EMBL/GenBank/DDBJ databases">
        <authorList>
            <person name="Jin S.J."/>
            <person name="Kang H.L."/>
            <person name="Kang H.S."/>
        </authorList>
    </citation>
    <scope>NUCLEOTIDE SEQUENCE [GENOMIC DNA]</scope>
    <source>
        <strain>ATCC 31821 / ZM4 / CP4</strain>
    </source>
</reference>
<reference key="2">
    <citation type="journal article" date="2005" name="Nat. Biotechnol.">
        <title>The genome sequence of the ethanologenic bacterium Zymomonas mobilis ZM4.</title>
        <authorList>
            <person name="Seo J.-S."/>
            <person name="Chong H."/>
            <person name="Park H.S."/>
            <person name="Yoon K.-O."/>
            <person name="Jung C."/>
            <person name="Kim J.J."/>
            <person name="Hong J.H."/>
            <person name="Kim H."/>
            <person name="Kim J.-H."/>
            <person name="Kil J.-I."/>
            <person name="Park C.J."/>
            <person name="Oh H.-M."/>
            <person name="Lee J.-S."/>
            <person name="Jin S.-J."/>
            <person name="Um H.-W."/>
            <person name="Lee H.-J."/>
            <person name="Oh S.-J."/>
            <person name="Kim J.Y."/>
            <person name="Kang H.L."/>
            <person name="Lee S.Y."/>
            <person name="Lee K.J."/>
            <person name="Kang H.S."/>
        </authorList>
    </citation>
    <scope>NUCLEOTIDE SEQUENCE [LARGE SCALE GENOMIC DNA]</scope>
    <source>
        <strain>ATCC 31821 / ZM4 / CP4</strain>
    </source>
</reference>
<protein>
    <recommendedName>
        <fullName evidence="1">Transcription elongation factor GreA</fullName>
    </recommendedName>
    <alternativeName>
        <fullName evidence="1">Transcript cleavage factor GreA</fullName>
    </alternativeName>
</protein>
<organism>
    <name type="scientific">Zymomonas mobilis subsp. mobilis (strain ATCC 31821 / ZM4 / CP4)</name>
    <dbReference type="NCBI Taxonomy" id="264203"/>
    <lineage>
        <taxon>Bacteria</taxon>
        <taxon>Pseudomonadati</taxon>
        <taxon>Pseudomonadota</taxon>
        <taxon>Alphaproteobacteria</taxon>
        <taxon>Sphingomonadales</taxon>
        <taxon>Zymomonadaceae</taxon>
        <taxon>Zymomonas</taxon>
    </lineage>
</organism>
<feature type="chain" id="PRO_0000177005" description="Transcription elongation factor GreA">
    <location>
        <begin position="1"/>
        <end position="158"/>
    </location>
</feature>
<comment type="function">
    <text evidence="1">Necessary for efficient RNA polymerase transcription elongation past template-encoded arresting sites. The arresting sites in DNA have the property of trapping a certain fraction of elongating RNA polymerases that pass through, resulting in locked ternary complexes. Cleavage of the nascent transcript by cleavage factors such as GreA or GreB allows the resumption of elongation from the new 3'terminus. GreA releases sequences of 2 to 3 nucleotides.</text>
</comment>
<comment type="similarity">
    <text evidence="1">Belongs to the GreA/GreB family.</text>
</comment>
<accession>O50237</accession>
<accession>Q5NM21</accession>
<proteinExistence type="inferred from homology"/>
<evidence type="ECO:0000255" key="1">
    <source>
        <dbReference type="HAMAP-Rule" id="MF_00105"/>
    </source>
</evidence>
<gene>
    <name evidence="1" type="primary">greA</name>
    <name type="ordered locus">ZMO1615</name>
</gene>
<sequence>MAAQEKIPMLIEGQQMLMDELARLHAERPKIIDAIEEARAHGDLSENAEYHAAKERQGQVEAMIGDIEGKLSRALVIDPKTLSGDKVIFGATVHLLDEDDKPVKYQIVGQTEANAKGGRISYNSPLGRALIGRKVDDEIEVSVPSGDRYYLISKIEFI</sequence>
<name>GREA_ZYMMO</name>
<keyword id="KW-0238">DNA-binding</keyword>
<keyword id="KW-1185">Reference proteome</keyword>
<keyword id="KW-0804">Transcription</keyword>
<keyword id="KW-0805">Transcription regulation</keyword>
<dbReference type="EMBL" id="AF086791">
    <property type="protein sequence ID" value="AAC70357.1"/>
    <property type="molecule type" value="Genomic_DNA"/>
</dbReference>
<dbReference type="EMBL" id="AE008692">
    <property type="protein sequence ID" value="AAV90239.2"/>
    <property type="molecule type" value="Genomic_DNA"/>
</dbReference>
<dbReference type="PIR" id="T33718">
    <property type="entry name" value="T33718"/>
</dbReference>
<dbReference type="RefSeq" id="WP_011241368.1">
    <property type="nucleotide sequence ID" value="NZ_CP035711.1"/>
</dbReference>
<dbReference type="SMR" id="O50237"/>
<dbReference type="STRING" id="264203.ZMO1615"/>
<dbReference type="GeneID" id="79905051"/>
<dbReference type="KEGG" id="zmo:ZMO1615"/>
<dbReference type="eggNOG" id="COG0782">
    <property type="taxonomic scope" value="Bacteria"/>
</dbReference>
<dbReference type="HOGENOM" id="CLU_101379_2_0_5"/>
<dbReference type="Proteomes" id="UP000001173">
    <property type="component" value="Chromosome"/>
</dbReference>
<dbReference type="GO" id="GO:0003677">
    <property type="term" value="F:DNA binding"/>
    <property type="evidence" value="ECO:0007669"/>
    <property type="project" value="UniProtKB-UniRule"/>
</dbReference>
<dbReference type="GO" id="GO:0070063">
    <property type="term" value="F:RNA polymerase binding"/>
    <property type="evidence" value="ECO:0007669"/>
    <property type="project" value="InterPro"/>
</dbReference>
<dbReference type="GO" id="GO:0006354">
    <property type="term" value="P:DNA-templated transcription elongation"/>
    <property type="evidence" value="ECO:0007669"/>
    <property type="project" value="TreeGrafter"/>
</dbReference>
<dbReference type="GO" id="GO:0032784">
    <property type="term" value="P:regulation of DNA-templated transcription elongation"/>
    <property type="evidence" value="ECO:0007669"/>
    <property type="project" value="UniProtKB-UniRule"/>
</dbReference>
<dbReference type="FunFam" id="1.10.287.180:FF:000001">
    <property type="entry name" value="Transcription elongation factor GreA"/>
    <property type="match status" value="1"/>
</dbReference>
<dbReference type="FunFam" id="3.10.50.30:FF:000001">
    <property type="entry name" value="Transcription elongation factor GreA"/>
    <property type="match status" value="1"/>
</dbReference>
<dbReference type="Gene3D" id="3.10.50.30">
    <property type="entry name" value="Transcription elongation factor, GreA/GreB, C-terminal domain"/>
    <property type="match status" value="1"/>
</dbReference>
<dbReference type="Gene3D" id="1.10.287.180">
    <property type="entry name" value="Transcription elongation factor, GreA/GreB, N-terminal domain"/>
    <property type="match status" value="1"/>
</dbReference>
<dbReference type="HAMAP" id="MF_00105">
    <property type="entry name" value="GreA_GreB"/>
    <property type="match status" value="1"/>
</dbReference>
<dbReference type="InterPro" id="IPR036953">
    <property type="entry name" value="GreA/GreB_C_sf"/>
</dbReference>
<dbReference type="InterPro" id="IPR018151">
    <property type="entry name" value="TF_GreA/GreB_CS"/>
</dbReference>
<dbReference type="InterPro" id="IPR006359">
    <property type="entry name" value="Tscrpt_elong_fac_GreA"/>
</dbReference>
<dbReference type="InterPro" id="IPR028624">
    <property type="entry name" value="Tscrpt_elong_fac_GreA/B"/>
</dbReference>
<dbReference type="InterPro" id="IPR001437">
    <property type="entry name" value="Tscrpt_elong_fac_GreA/B_C"/>
</dbReference>
<dbReference type="InterPro" id="IPR023459">
    <property type="entry name" value="Tscrpt_elong_fac_GreA/B_fam"/>
</dbReference>
<dbReference type="InterPro" id="IPR022691">
    <property type="entry name" value="Tscrpt_elong_fac_GreA/B_N"/>
</dbReference>
<dbReference type="InterPro" id="IPR036805">
    <property type="entry name" value="Tscrpt_elong_fac_GreA/B_N_sf"/>
</dbReference>
<dbReference type="NCBIfam" id="TIGR01462">
    <property type="entry name" value="greA"/>
    <property type="match status" value="1"/>
</dbReference>
<dbReference type="NCBIfam" id="NF001261">
    <property type="entry name" value="PRK00226.1-2"/>
    <property type="match status" value="1"/>
</dbReference>
<dbReference type="NCBIfam" id="NF001263">
    <property type="entry name" value="PRK00226.1-4"/>
    <property type="match status" value="1"/>
</dbReference>
<dbReference type="NCBIfam" id="NF001264">
    <property type="entry name" value="PRK00226.1-5"/>
    <property type="match status" value="1"/>
</dbReference>
<dbReference type="PANTHER" id="PTHR30437">
    <property type="entry name" value="TRANSCRIPTION ELONGATION FACTOR GREA"/>
    <property type="match status" value="1"/>
</dbReference>
<dbReference type="PANTHER" id="PTHR30437:SF4">
    <property type="entry name" value="TRANSCRIPTION ELONGATION FACTOR GREA"/>
    <property type="match status" value="1"/>
</dbReference>
<dbReference type="Pfam" id="PF01272">
    <property type="entry name" value="GreA_GreB"/>
    <property type="match status" value="1"/>
</dbReference>
<dbReference type="Pfam" id="PF03449">
    <property type="entry name" value="GreA_GreB_N"/>
    <property type="match status" value="1"/>
</dbReference>
<dbReference type="PIRSF" id="PIRSF006092">
    <property type="entry name" value="GreA_GreB"/>
    <property type="match status" value="1"/>
</dbReference>
<dbReference type="SUPFAM" id="SSF54534">
    <property type="entry name" value="FKBP-like"/>
    <property type="match status" value="1"/>
</dbReference>
<dbReference type="SUPFAM" id="SSF46557">
    <property type="entry name" value="GreA transcript cleavage protein, N-terminal domain"/>
    <property type="match status" value="1"/>
</dbReference>
<dbReference type="PROSITE" id="PS00829">
    <property type="entry name" value="GREAB_1"/>
    <property type="match status" value="1"/>
</dbReference>
<dbReference type="PROSITE" id="PS00830">
    <property type="entry name" value="GREAB_2"/>
    <property type="match status" value="1"/>
</dbReference>